<proteinExistence type="evidence at protein level"/>
<sequence length="257" mass="28995">MRDTMEILRTENIVKYFGEFKALDGVSISVNKGDVTLIIGPNGSGKSTLINVITGFLKADEGRVYFENKDITNKEPAELYHYGIVRTFQTPQPLKEMTVLENLLIGEINPGESPLNSLFYKKWIPKEEEMVEKAFKILEFLKLSHLYDRKAGELSGGQMKLVEIGRALMTNPKMIVMDEPIAGVAPGLAHDIFNHVLELKAKGITFLIIEHRLDIVLNYIDHLYVMFNGQIIAEGRGEEEIKNVLSDPKVVEIYIGE</sequence>
<accession>Q58663</accession>
<name>LIVG_METJA</name>
<gene>
    <name type="primary">livG</name>
    <name type="ordered locus">MJ1267</name>
</gene>
<keyword id="KW-0002">3D-structure</keyword>
<keyword id="KW-0029">Amino-acid transport</keyword>
<keyword id="KW-0067">ATP-binding</keyword>
<keyword id="KW-0547">Nucleotide-binding</keyword>
<keyword id="KW-1185">Reference proteome</keyword>
<keyword id="KW-0813">Transport</keyword>
<comment type="function">
    <text>Probable component of a branched-chain amino-acid transport system.</text>
</comment>
<comment type="subunit">
    <text>Monomer.</text>
</comment>
<comment type="similarity">
    <text evidence="2">Belongs to the ABC transporter superfamily.</text>
</comment>
<protein>
    <recommendedName>
        <fullName>Probable branched-chain amino acid transport ATP-binding protein LivG</fullName>
    </recommendedName>
</protein>
<evidence type="ECO:0000255" key="1">
    <source>
        <dbReference type="PROSITE-ProRule" id="PRU00434"/>
    </source>
</evidence>
<evidence type="ECO:0000305" key="2"/>
<evidence type="ECO:0007829" key="3">
    <source>
        <dbReference type="PDB" id="1G6H"/>
    </source>
</evidence>
<evidence type="ECO:0007829" key="4">
    <source>
        <dbReference type="PDB" id="1GAJ"/>
    </source>
</evidence>
<feature type="chain" id="PRO_0000092412" description="Probable branched-chain amino acid transport ATP-binding protein LivG">
    <location>
        <begin position="1"/>
        <end position="257"/>
    </location>
</feature>
<feature type="domain" description="ABC transporter" evidence="1">
    <location>
        <begin position="8"/>
        <end position="253"/>
    </location>
</feature>
<feature type="binding site" evidence="1">
    <location>
        <begin position="40"/>
        <end position="47"/>
    </location>
    <ligand>
        <name>ATP</name>
        <dbReference type="ChEBI" id="CHEBI:30616"/>
    </ligand>
</feature>
<feature type="strand" evidence="3">
    <location>
        <begin position="6"/>
        <end position="17"/>
    </location>
</feature>
<feature type="strand" evidence="3">
    <location>
        <begin position="20"/>
        <end position="26"/>
    </location>
</feature>
<feature type="strand" evidence="3">
    <location>
        <begin position="29"/>
        <end position="31"/>
    </location>
</feature>
<feature type="strand" evidence="3">
    <location>
        <begin position="35"/>
        <end position="39"/>
    </location>
</feature>
<feature type="helix" evidence="3">
    <location>
        <begin position="46"/>
        <end position="53"/>
    </location>
</feature>
<feature type="strand" evidence="3">
    <location>
        <begin position="60"/>
        <end position="66"/>
    </location>
</feature>
<feature type="helix" evidence="3">
    <location>
        <begin position="76"/>
        <end position="82"/>
    </location>
</feature>
<feature type="strand" evidence="3">
    <location>
        <begin position="84"/>
        <end position="86"/>
    </location>
</feature>
<feature type="helix" evidence="3">
    <location>
        <begin position="92"/>
        <end position="96"/>
    </location>
</feature>
<feature type="helix" evidence="3">
    <location>
        <begin position="99"/>
        <end position="104"/>
    </location>
</feature>
<feature type="helix" evidence="3">
    <location>
        <begin position="105"/>
        <end position="107"/>
    </location>
</feature>
<feature type="helix" evidence="3">
    <location>
        <begin position="114"/>
        <end position="120"/>
    </location>
</feature>
<feature type="helix" evidence="3">
    <location>
        <begin position="128"/>
        <end position="140"/>
    </location>
</feature>
<feature type="helix" evidence="3">
    <location>
        <begin position="144"/>
        <end position="146"/>
    </location>
</feature>
<feature type="helix" evidence="3">
    <location>
        <begin position="151"/>
        <end position="153"/>
    </location>
</feature>
<feature type="helix" evidence="3">
    <location>
        <begin position="156"/>
        <end position="169"/>
    </location>
</feature>
<feature type="strand" evidence="3">
    <location>
        <begin position="173"/>
        <end position="179"/>
    </location>
</feature>
<feature type="turn" evidence="3">
    <location>
        <begin position="180"/>
        <end position="183"/>
    </location>
</feature>
<feature type="helix" evidence="3">
    <location>
        <begin position="186"/>
        <end position="201"/>
    </location>
</feature>
<feature type="strand" evidence="3">
    <location>
        <begin position="205"/>
        <end position="209"/>
    </location>
</feature>
<feature type="helix" evidence="4">
    <location>
        <begin position="213"/>
        <end position="216"/>
    </location>
</feature>
<feature type="helix" evidence="3">
    <location>
        <begin position="217"/>
        <end position="219"/>
    </location>
</feature>
<feature type="strand" evidence="3">
    <location>
        <begin position="221"/>
        <end position="227"/>
    </location>
</feature>
<feature type="strand" evidence="3">
    <location>
        <begin position="230"/>
        <end position="237"/>
    </location>
</feature>
<feature type="helix" evidence="3">
    <location>
        <begin position="238"/>
        <end position="246"/>
    </location>
</feature>
<feature type="helix" evidence="3">
    <location>
        <begin position="248"/>
        <end position="252"/>
    </location>
</feature>
<feature type="turn" evidence="3">
    <location>
        <begin position="253"/>
        <end position="256"/>
    </location>
</feature>
<reference key="1">
    <citation type="journal article" date="1996" name="Science">
        <title>Complete genome sequence of the methanogenic archaeon, Methanococcus jannaschii.</title>
        <authorList>
            <person name="Bult C.J."/>
            <person name="White O."/>
            <person name="Olsen G.J."/>
            <person name="Zhou L."/>
            <person name="Fleischmann R.D."/>
            <person name="Sutton G.G."/>
            <person name="Blake J.A."/>
            <person name="FitzGerald L.M."/>
            <person name="Clayton R.A."/>
            <person name="Gocayne J.D."/>
            <person name="Kerlavage A.R."/>
            <person name="Dougherty B.A."/>
            <person name="Tomb J.-F."/>
            <person name="Adams M.D."/>
            <person name="Reich C.I."/>
            <person name="Overbeek R."/>
            <person name="Kirkness E.F."/>
            <person name="Weinstock K.G."/>
            <person name="Merrick J.M."/>
            <person name="Glodek A."/>
            <person name="Scott J.L."/>
            <person name="Geoghagen N.S.M."/>
            <person name="Weidman J.F."/>
            <person name="Fuhrmann J.L."/>
            <person name="Nguyen D."/>
            <person name="Utterback T.R."/>
            <person name="Kelley J.M."/>
            <person name="Peterson J.D."/>
            <person name="Sadow P.W."/>
            <person name="Hanna M.C."/>
            <person name="Cotton M.D."/>
            <person name="Roberts K.M."/>
            <person name="Hurst M.A."/>
            <person name="Kaine B.P."/>
            <person name="Borodovsky M."/>
            <person name="Klenk H.-P."/>
            <person name="Fraser C.M."/>
            <person name="Smith H.O."/>
            <person name="Woese C.R."/>
            <person name="Venter J.C."/>
        </authorList>
    </citation>
    <scope>NUCLEOTIDE SEQUENCE [LARGE SCALE GENOMIC DNA]</scope>
    <source>
        <strain>ATCC 43067 / DSM 2661 / JAL-1 / JCM 10045 / NBRC 100440</strain>
    </source>
</reference>
<reference key="2">
    <citation type="journal article" date="2001" name="Structure">
        <title>Crystal structures of the MJ1267 ATP binding cassette reveal an induced-fit effect at the ATPase active site of an ABC transporter.</title>
        <authorList>
            <person name="Karpowich N."/>
            <person name="Martsinkevich O."/>
            <person name="Millen L."/>
            <person name="Yuan Y.-R."/>
            <person name="Dai P.L."/>
            <person name="MacVey K."/>
            <person name="Thomas P.J."/>
            <person name="Hunt J.F."/>
        </authorList>
    </citation>
    <scope>X-RAY CRYSTALLOGRAPHY (1.6 ANGSTROMS)</scope>
</reference>
<organism>
    <name type="scientific">Methanocaldococcus jannaschii (strain ATCC 43067 / DSM 2661 / JAL-1 / JCM 10045 / NBRC 100440)</name>
    <name type="common">Methanococcus jannaschii</name>
    <dbReference type="NCBI Taxonomy" id="243232"/>
    <lineage>
        <taxon>Archaea</taxon>
        <taxon>Methanobacteriati</taxon>
        <taxon>Methanobacteriota</taxon>
        <taxon>Methanomada group</taxon>
        <taxon>Methanococci</taxon>
        <taxon>Methanococcales</taxon>
        <taxon>Methanocaldococcaceae</taxon>
        <taxon>Methanocaldococcus</taxon>
    </lineage>
</organism>
<dbReference type="EMBL" id="L77117">
    <property type="protein sequence ID" value="AAB99273.1"/>
    <property type="molecule type" value="Genomic_DNA"/>
</dbReference>
<dbReference type="PIR" id="B64458">
    <property type="entry name" value="B64458"/>
</dbReference>
<dbReference type="PDB" id="1G6H">
    <property type="method" value="X-ray"/>
    <property type="resolution" value="1.60 A"/>
    <property type="chains" value="A=1-257"/>
</dbReference>
<dbReference type="PDB" id="1G9X">
    <property type="method" value="X-ray"/>
    <property type="resolution" value="2.60 A"/>
    <property type="chains" value="A/B/C=1-257"/>
</dbReference>
<dbReference type="PDB" id="1GAJ">
    <property type="method" value="X-ray"/>
    <property type="resolution" value="2.50 A"/>
    <property type="chains" value="A=1-257"/>
</dbReference>
<dbReference type="PDBsum" id="1G6H"/>
<dbReference type="PDBsum" id="1G9X"/>
<dbReference type="PDBsum" id="1GAJ"/>
<dbReference type="BMRB" id="Q58663"/>
<dbReference type="SMR" id="Q58663"/>
<dbReference type="FunCoup" id="Q58663">
    <property type="interactions" value="30"/>
</dbReference>
<dbReference type="STRING" id="243232.MJ_1267"/>
<dbReference type="PaxDb" id="243232-MJ_1267"/>
<dbReference type="EnsemblBacteria" id="AAB99273">
    <property type="protein sequence ID" value="AAB99273"/>
    <property type="gene ID" value="MJ_1267"/>
</dbReference>
<dbReference type="KEGG" id="mja:MJ_1267"/>
<dbReference type="eggNOG" id="arCOG00925">
    <property type="taxonomic scope" value="Archaea"/>
</dbReference>
<dbReference type="HOGENOM" id="CLU_000604_1_2_2"/>
<dbReference type="InParanoid" id="Q58663"/>
<dbReference type="PhylomeDB" id="Q58663"/>
<dbReference type="EvolutionaryTrace" id="Q58663"/>
<dbReference type="Proteomes" id="UP000000805">
    <property type="component" value="Chromosome"/>
</dbReference>
<dbReference type="GO" id="GO:0005886">
    <property type="term" value="C:plasma membrane"/>
    <property type="evidence" value="ECO:0000318"/>
    <property type="project" value="GO_Central"/>
</dbReference>
<dbReference type="GO" id="GO:0005524">
    <property type="term" value="F:ATP binding"/>
    <property type="evidence" value="ECO:0007669"/>
    <property type="project" value="UniProtKB-KW"/>
</dbReference>
<dbReference type="GO" id="GO:0016887">
    <property type="term" value="F:ATP hydrolysis activity"/>
    <property type="evidence" value="ECO:0007669"/>
    <property type="project" value="InterPro"/>
</dbReference>
<dbReference type="GO" id="GO:0006865">
    <property type="term" value="P:amino acid transport"/>
    <property type="evidence" value="ECO:0007669"/>
    <property type="project" value="UniProtKB-KW"/>
</dbReference>
<dbReference type="CDD" id="cd03219">
    <property type="entry name" value="ABC_Mj1267_LivG_branched"/>
    <property type="match status" value="1"/>
</dbReference>
<dbReference type="FunFam" id="3.40.50.300:FF:000421">
    <property type="entry name" value="Branched-chain amino acid ABC transporter ATP-binding protein"/>
    <property type="match status" value="1"/>
</dbReference>
<dbReference type="Gene3D" id="3.40.50.300">
    <property type="entry name" value="P-loop containing nucleotide triphosphate hydrolases"/>
    <property type="match status" value="1"/>
</dbReference>
<dbReference type="InterPro" id="IPR003593">
    <property type="entry name" value="AAA+_ATPase"/>
</dbReference>
<dbReference type="InterPro" id="IPR051120">
    <property type="entry name" value="ABC_AA/LPS_Transport"/>
</dbReference>
<dbReference type="InterPro" id="IPR003439">
    <property type="entry name" value="ABC_transporter-like_ATP-bd"/>
</dbReference>
<dbReference type="InterPro" id="IPR017871">
    <property type="entry name" value="ABC_transporter-like_CS"/>
</dbReference>
<dbReference type="InterPro" id="IPR027417">
    <property type="entry name" value="P-loop_NTPase"/>
</dbReference>
<dbReference type="PANTHER" id="PTHR45772:SF5">
    <property type="entry name" value="BRANCHED-CHAIN AMINO ACID TRANSPORT ATP-BINDING PROTEIN LIVG-RELATED"/>
    <property type="match status" value="1"/>
</dbReference>
<dbReference type="PANTHER" id="PTHR45772">
    <property type="entry name" value="CONSERVED COMPONENT OF ABC TRANSPORTER FOR NATURAL AMINO ACIDS-RELATED"/>
    <property type="match status" value="1"/>
</dbReference>
<dbReference type="Pfam" id="PF00005">
    <property type="entry name" value="ABC_tran"/>
    <property type="match status" value="1"/>
</dbReference>
<dbReference type="SMART" id="SM00382">
    <property type="entry name" value="AAA"/>
    <property type="match status" value="1"/>
</dbReference>
<dbReference type="SUPFAM" id="SSF52540">
    <property type="entry name" value="P-loop containing nucleoside triphosphate hydrolases"/>
    <property type="match status" value="1"/>
</dbReference>
<dbReference type="PROSITE" id="PS00211">
    <property type="entry name" value="ABC_TRANSPORTER_1"/>
    <property type="match status" value="1"/>
</dbReference>
<dbReference type="PROSITE" id="PS50893">
    <property type="entry name" value="ABC_TRANSPORTER_2"/>
    <property type="match status" value="1"/>
</dbReference>